<protein>
    <recommendedName>
        <fullName evidence="4">(S)-6-hydroxynicotine oxidase</fullName>
        <shortName evidence="4">(S)-6HN oxidase</shortName>
        <ecNumber evidence="1">1.5.3.5</ecNumber>
    </recommendedName>
    <alternativeName>
        <fullName evidence="5">6-hydroxy-L-nicotine oxidase</fullName>
        <shortName evidence="5">6-HLNO</shortName>
    </alternativeName>
    <alternativeName>
        <fullName evidence="5">L-hydroxynicotine oxidase</fullName>
        <shortName evidence="5">LHNO</shortName>
    </alternativeName>
</protein>
<geneLocation type="plasmid">
    <name>pShin-05</name>
</geneLocation>
<comment type="function">
    <text evidence="1 2">Involved in the degradation of L-nicotine (PubMed:25002425). Catalyzes the oxidation of (S)-6-hydroxynicotine (6-hydroxy-L-nicotine) to 6-hydroxypseudooxynicotine (PubMed:25002425). Oxidation of the pyrrolidine ring of (S)-6-hydroxynicotine leads to the formation of the optically inactive 6-hydroxy-N-methylmyosmine, which hydrolyzes spontaneously to 6-hydroxypseudooxynicotine (PubMed:25002425). Acts with absolute stereospecificity on the L-form of 6-hydroxynicotine (PubMed:25002425). Also involved in the degradation of nornicotine, and catalyzes the oxidation of 6-hydroxynornicotine to 6-hydroxymyosmine, which hydrolyzes to 6-hydroxypseudooxynornicotine (PubMed:27568381). In vitro, converts (S)-nicotine into N-methylmyosmine, which spontaneously hydrolyzes spontaneously into pseudooxynicotine, but catalytic efficiency is about 1900-fold higher with (S)-6-hydroxynicotine (PubMed:25002425).</text>
</comment>
<comment type="catalytic activity">
    <reaction evidence="1">
        <text>(S)-6-hydroxynicotine + O2 + H2O = 6-hydroxypseudooxynicotine + H2O2</text>
        <dbReference type="Rhea" id="RHEA:11880"/>
        <dbReference type="ChEBI" id="CHEBI:15377"/>
        <dbReference type="ChEBI" id="CHEBI:15379"/>
        <dbReference type="ChEBI" id="CHEBI:16240"/>
        <dbReference type="ChEBI" id="CHEBI:58182"/>
        <dbReference type="ChEBI" id="CHEBI:58682"/>
        <dbReference type="EC" id="1.5.3.5"/>
    </reaction>
    <physiologicalReaction direction="left-to-right" evidence="1">
        <dbReference type="Rhea" id="RHEA:11881"/>
    </physiologicalReaction>
</comment>
<comment type="catalytic activity">
    <reaction evidence="1">
        <text>(S)-6-hydroxynicotine + O2 = 6-hydroxy-N-methylmyosmine + H2O2</text>
        <dbReference type="Rhea" id="RHEA:46976"/>
        <dbReference type="ChEBI" id="CHEBI:15379"/>
        <dbReference type="ChEBI" id="CHEBI:16240"/>
        <dbReference type="ChEBI" id="CHEBI:58182"/>
        <dbReference type="ChEBI" id="CHEBI:87164"/>
    </reaction>
    <physiologicalReaction direction="left-to-right" evidence="1">
        <dbReference type="Rhea" id="RHEA:46977"/>
    </physiologicalReaction>
</comment>
<comment type="cofactor">
    <cofactor evidence="1">
        <name>FAD</name>
        <dbReference type="ChEBI" id="CHEBI:57692"/>
    </cofactor>
    <text evidence="1">Binds 1 FAD per subunit.</text>
</comment>
<comment type="activity regulation">
    <text evidence="1">Partially inhibited by Co(2+) or Zn(2+) and significantly inhibited by Ag(+), Cu(2+) and Hg(2+).</text>
</comment>
<comment type="biophysicochemical properties">
    <kinetics>
        <KM evidence="1">0.019 mM for (S)-6-hydroxynicotine</KM>
        <KM evidence="2">0.033 mM for 6-hydroxynornicotine</KM>
        <KM evidence="1">2.03 mM for nicotine</KM>
        <text evidence="1 2">kcat is 7.3 sec(-1) with (S)-6-hydroxynicotine as substrate. kcat is 0.396 sec(-1) with nicotine as substrate (PubMed:25002425). kcat is 5.9 sec(-1) with 6-hydroxynornicotine as substrate (PubMed:27568381).</text>
    </kinetics>
    <phDependence>
        <text evidence="1">Optimum pH is 7.0. Stable between pH 6.0 and 9.8.</text>
    </phDependence>
    <temperatureDependence>
        <text evidence="1">Optimum temperature is 40 degrees Celsius. Stable at temperatures lower than 50 degrees Celsius.</text>
    </temperatureDependence>
</comment>
<comment type="pathway">
    <text evidence="5">Alkaloid degradation; nicotine degradation; 6-hydroxypseudooxynicotine from nicotine (S-isomer route): step 2/2.</text>
</comment>
<comment type="subunit">
    <text evidence="1">Homodimer.</text>
</comment>
<comment type="disruption phenotype">
    <text evidence="1">Disruption of the gene abolishes the ability of the mutant to degrade (S)-6-hydroxynicotine.</text>
</comment>
<comment type="similarity">
    <text evidence="5">Belongs to the flavin monoamine oxidase family.</text>
</comment>
<keyword id="KW-0002">3D-structure</keyword>
<keyword id="KW-0017">Alkaloid metabolism</keyword>
<keyword id="KW-0274">FAD</keyword>
<keyword id="KW-0285">Flavoprotein</keyword>
<keyword id="KW-0547">Nucleotide-binding</keyword>
<keyword id="KW-0560">Oxidoreductase</keyword>
<keyword id="KW-0614">Plasmid</keyword>
<name>HLNO_SHIS7</name>
<organism>
    <name type="scientific">Shinella sp. (strain HZN7)</name>
    <dbReference type="NCBI Taxonomy" id="879274"/>
    <lineage>
        <taxon>Bacteria</taxon>
        <taxon>Pseudomonadati</taxon>
        <taxon>Pseudomonadota</taxon>
        <taxon>Alphaproteobacteria</taxon>
        <taxon>Hyphomicrobiales</taxon>
        <taxon>Rhizobiaceae</taxon>
        <taxon>Shinella</taxon>
    </lineage>
</organism>
<sequence>MTEKIYDAIVVGAGFSGLVAARELSAQGRSVLIIEARHRLGGRTHVVNFLGRPVEIGGAGVHWCQPHVFAEMQRYGFGFKEAPLADLDKAYMVFADGQKIDVPPATFDEEYTTAFEKFCSRSRELFPRPYSPLDNHEVSNLDGVSARDHLESLGLNELQLASMNAELTLYGGAPTTELSYPSFVKFHALASWDTITFTDSEKRYHVQGGTNALCQAIFDDCRADSEFGVPVEAVAQTDNGVTVTLADKRVFRALTCVLTLPTKVYADVRFEPPLPPEKRAFIEHAEMADGAELYVHVRQNLGNTFTFCDDPNPFNAVQTYAYDDELGTILKITIGRQSLINLENFDAIAAEIRKIHGDVEVLEALPYNWAMDEYARTSYPAMRKGWFSRYKDMAKPENRLFFAGSATADGWHEYIDGAIESGIRVGREIRHFMKATA</sequence>
<proteinExistence type="evidence at protein level"/>
<accession>A0A075BSX9</accession>
<dbReference type="EC" id="1.5.3.5" evidence="1"/>
<dbReference type="EMBL" id="KF306095">
    <property type="protein sequence ID" value="AGS16700.1"/>
    <property type="molecule type" value="Genomic_DNA"/>
</dbReference>
<dbReference type="EMBL" id="CP015741">
    <property type="protein sequence ID" value="ANH08442.1"/>
    <property type="molecule type" value="Genomic_DNA"/>
</dbReference>
<dbReference type="RefSeq" id="WP_064334256.1">
    <property type="nucleotide sequence ID" value="NZ_CP015741.1"/>
</dbReference>
<dbReference type="PDB" id="6CR0">
    <property type="method" value="X-ray"/>
    <property type="resolution" value="1.55 A"/>
    <property type="chains" value="A=1-437"/>
</dbReference>
<dbReference type="PDBsum" id="6CR0"/>
<dbReference type="SMR" id="A0A075BSX9"/>
<dbReference type="KEGG" id="shz:shn_30305"/>
<dbReference type="OrthoDB" id="337830at2"/>
<dbReference type="BioCyc" id="MetaCyc:MONOMER-17710"/>
<dbReference type="BRENDA" id="1.5.3.5">
    <property type="organism ID" value="15268"/>
</dbReference>
<dbReference type="UniPathway" id="UPA00106">
    <property type="reaction ID" value="UER00919"/>
</dbReference>
<dbReference type="Proteomes" id="UP000077495">
    <property type="component" value="Plasmid pShin-05"/>
</dbReference>
<dbReference type="GO" id="GO:0018531">
    <property type="term" value="F:(S)-6-hydroxynicotine oxidase activity"/>
    <property type="evidence" value="ECO:0007669"/>
    <property type="project" value="UniProtKB-EC"/>
</dbReference>
<dbReference type="GO" id="GO:0000166">
    <property type="term" value="F:nucleotide binding"/>
    <property type="evidence" value="ECO:0007669"/>
    <property type="project" value="UniProtKB-KW"/>
</dbReference>
<dbReference type="GO" id="GO:0009820">
    <property type="term" value="P:alkaloid metabolic process"/>
    <property type="evidence" value="ECO:0007669"/>
    <property type="project" value="UniProtKB-KW"/>
</dbReference>
<dbReference type="GO" id="GO:0019608">
    <property type="term" value="P:nicotine catabolic process"/>
    <property type="evidence" value="ECO:0007669"/>
    <property type="project" value="UniProtKB-UniPathway"/>
</dbReference>
<dbReference type="Gene3D" id="3.50.50.60">
    <property type="entry name" value="FAD/NAD(P)-binding domain"/>
    <property type="match status" value="3"/>
</dbReference>
<dbReference type="InterPro" id="IPR002937">
    <property type="entry name" value="Amino_oxidase"/>
</dbReference>
<dbReference type="InterPro" id="IPR036188">
    <property type="entry name" value="FAD/NAD-bd_sf"/>
</dbReference>
<dbReference type="InterPro" id="IPR001613">
    <property type="entry name" value="Flavin_amine_oxidase"/>
</dbReference>
<dbReference type="InterPro" id="IPR050703">
    <property type="entry name" value="Flavin_MAO"/>
</dbReference>
<dbReference type="PANTHER" id="PTHR43563">
    <property type="entry name" value="AMINE OXIDASE"/>
    <property type="match status" value="1"/>
</dbReference>
<dbReference type="PANTHER" id="PTHR43563:SF1">
    <property type="entry name" value="AMINE OXIDASE [FLAVIN-CONTAINING] B"/>
    <property type="match status" value="1"/>
</dbReference>
<dbReference type="Pfam" id="PF01593">
    <property type="entry name" value="Amino_oxidase"/>
    <property type="match status" value="1"/>
</dbReference>
<dbReference type="PRINTS" id="PR00757">
    <property type="entry name" value="AMINEOXDASEF"/>
</dbReference>
<dbReference type="SUPFAM" id="SSF51905">
    <property type="entry name" value="FAD/NAD(P)-binding domain"/>
    <property type="match status" value="1"/>
</dbReference>
<reference key="1">
    <citation type="journal article" date="2014" name="Appl. Environ. Microbiol.">
        <title>A novel (S)-6-hydroxynicotine oxidase gene from Shinella sp. strain HZN7.</title>
        <authorList>
            <person name="Qiu J."/>
            <person name="Wei Y."/>
            <person name="Ma Y."/>
            <person name="Wen R."/>
            <person name="Wen Y."/>
            <person name="Liu W."/>
        </authorList>
    </citation>
    <scope>NUCLEOTIDE SEQUENCE [GENOMIC DNA]</scope>
    <scope>FUNCTION</scope>
    <scope>CATALYTIC ACTIVITY</scope>
    <scope>COFACTOR</scope>
    <scope>ACTIVITY REGULATION</scope>
    <scope>BIOPHYSICOCHEMICAL PROPERTIES</scope>
    <scope>SUBUNIT</scope>
    <scope>DISRUPTION PHENOTYPE</scope>
    <source>
        <strain>HZN7</strain>
    </source>
</reference>
<reference key="2">
    <citation type="journal article" date="2016" name="Front. Microbiol.">
        <title>The complete genome sequence of the nicotine-degrading bacterium Shinella sp. HZN7.</title>
        <authorList>
            <person name="Qiu J."/>
            <person name="Yang Y."/>
            <person name="Zhang J."/>
            <person name="Wang H."/>
            <person name="Ma Y."/>
            <person name="He J."/>
            <person name="Lu Z."/>
        </authorList>
    </citation>
    <scope>NUCLEOTIDE SEQUENCE [LARGE SCALE GENOMIC DNA]</scope>
    <source>
        <strain>HZN7</strain>
        <plasmid>pShin-05</plasmid>
    </source>
</reference>
<reference key="3">
    <citation type="journal article" date="2016" name="Appl. Microbiol. Biotechnol.">
        <title>Conversion of nornicotine to 6-hydroxy-nornicotine and 6-hydroxy-myosmine by Shinella sp. strain HZN7.</title>
        <authorList>
            <person name="Qiu J."/>
            <person name="Li N."/>
            <person name="Lu Z."/>
            <person name="Yang Y."/>
            <person name="Ma Y."/>
            <person name="Niu L."/>
            <person name="He J."/>
            <person name="Liu W."/>
        </authorList>
    </citation>
    <scope>FUNCTION IN NORNICOTINE DEGRADATION</scope>
    <scope>CATALYTIC ACTIVITY</scope>
    <scope>BIOPHYSICOCHEMICAL PROPERTIES</scope>
    <scope>DISRUPTION PHENOTYPE</scope>
</reference>
<reference evidence="7" key="4">
    <citation type="submission" date="2018-03" db="PDB data bank">
        <title>1.55 A resolution structure of (S)-6-hydroxynicotine oxidase from Shinella HZN7.</title>
        <authorList>
            <person name="Richter M."/>
        </authorList>
    </citation>
    <scope>X-RAY CRYSTALLOGRAPHY (1.55 ANGSTROMS) IN COMPLEX WITH FAD</scope>
</reference>
<evidence type="ECO:0000269" key="1">
    <source>
    </source>
</evidence>
<evidence type="ECO:0000269" key="2">
    <source>
    </source>
</evidence>
<evidence type="ECO:0000269" key="3">
    <source ref="4"/>
</evidence>
<evidence type="ECO:0000303" key="4">
    <source>
    </source>
</evidence>
<evidence type="ECO:0000305" key="5"/>
<evidence type="ECO:0000312" key="6">
    <source>
        <dbReference type="EMBL" id="ANH08442.1"/>
    </source>
</evidence>
<evidence type="ECO:0007744" key="7">
    <source>
        <dbReference type="PDB" id="6CR0"/>
    </source>
</evidence>
<evidence type="ECO:0007829" key="8">
    <source>
        <dbReference type="PDB" id="6CR0"/>
    </source>
</evidence>
<feature type="chain" id="PRO_0000455451" description="(S)-6-hydroxynicotine oxidase">
    <location>
        <begin position="1"/>
        <end position="437"/>
    </location>
</feature>
<feature type="binding site" evidence="3 7">
    <location>
        <position position="16"/>
    </location>
    <ligand>
        <name>FAD</name>
        <dbReference type="ChEBI" id="CHEBI:57692"/>
    </ligand>
</feature>
<feature type="binding site" evidence="3 7">
    <location>
        <begin position="35"/>
        <end position="37"/>
    </location>
    <ligand>
        <name>FAD</name>
        <dbReference type="ChEBI" id="CHEBI:57692"/>
    </ligand>
</feature>
<feature type="binding site" evidence="3 7">
    <location>
        <position position="43"/>
    </location>
    <ligand>
        <name>FAD</name>
        <dbReference type="ChEBI" id="CHEBI:57692"/>
    </ligand>
</feature>
<feature type="binding site" evidence="3 7">
    <location>
        <begin position="57"/>
        <end position="60"/>
    </location>
    <ligand>
        <name>FAD</name>
        <dbReference type="ChEBI" id="CHEBI:57692"/>
    </ligand>
</feature>
<feature type="binding site" evidence="3 7">
    <location>
        <position position="231"/>
    </location>
    <ligand>
        <name>FAD</name>
        <dbReference type="ChEBI" id="CHEBI:57692"/>
    </ligand>
</feature>
<feature type="binding site" evidence="3 7">
    <location>
        <position position="405"/>
    </location>
    <ligand>
        <name>FAD</name>
        <dbReference type="ChEBI" id="CHEBI:57692"/>
    </ligand>
</feature>
<feature type="binding site" evidence="3 7">
    <location>
        <begin position="413"/>
        <end position="415"/>
    </location>
    <ligand>
        <name>FAD</name>
        <dbReference type="ChEBI" id="CHEBI:57692"/>
    </ligand>
</feature>
<feature type="strand" evidence="8">
    <location>
        <begin position="6"/>
        <end position="11"/>
    </location>
</feature>
<feature type="helix" evidence="8">
    <location>
        <begin position="15"/>
        <end position="26"/>
    </location>
</feature>
<feature type="strand" evidence="8">
    <location>
        <begin position="31"/>
        <end position="41"/>
    </location>
</feature>
<feature type="strand" evidence="8">
    <location>
        <begin position="46"/>
        <end position="49"/>
    </location>
</feature>
<feature type="strand" evidence="8">
    <location>
        <begin position="52"/>
        <end position="55"/>
    </location>
</feature>
<feature type="helix" evidence="8">
    <location>
        <begin position="66"/>
        <end position="75"/>
    </location>
</feature>
<feature type="strand" evidence="8">
    <location>
        <begin position="79"/>
        <end position="81"/>
    </location>
</feature>
<feature type="strand" evidence="8">
    <location>
        <begin position="89"/>
        <end position="93"/>
    </location>
</feature>
<feature type="strand" evidence="8">
    <location>
        <begin position="99"/>
        <end position="102"/>
    </location>
</feature>
<feature type="helix" evidence="8">
    <location>
        <begin position="104"/>
        <end position="118"/>
    </location>
</feature>
<feature type="turn" evidence="8">
    <location>
        <begin position="119"/>
        <end position="121"/>
    </location>
</feature>
<feature type="helix" evidence="8">
    <location>
        <begin position="122"/>
        <end position="125"/>
    </location>
</feature>
<feature type="helix" evidence="8">
    <location>
        <begin position="137"/>
        <end position="141"/>
    </location>
</feature>
<feature type="helix" evidence="8">
    <location>
        <begin position="146"/>
        <end position="150"/>
    </location>
</feature>
<feature type="helix" evidence="8">
    <location>
        <begin position="157"/>
        <end position="171"/>
    </location>
</feature>
<feature type="strand" evidence="8">
    <location>
        <begin position="177"/>
        <end position="179"/>
    </location>
</feature>
<feature type="helix" evidence="8">
    <location>
        <begin position="180"/>
        <end position="189"/>
    </location>
</feature>
<feature type="turn" evidence="8">
    <location>
        <begin position="190"/>
        <end position="192"/>
    </location>
</feature>
<feature type="helix" evidence="8">
    <location>
        <begin position="194"/>
        <end position="200"/>
    </location>
</feature>
<feature type="strand" evidence="8">
    <location>
        <begin position="203"/>
        <end position="206"/>
    </location>
</feature>
<feature type="helix" evidence="8">
    <location>
        <begin position="210"/>
        <end position="219"/>
    </location>
</feature>
<feature type="strand" evidence="8">
    <location>
        <begin position="223"/>
        <end position="229"/>
    </location>
</feature>
<feature type="strand" evidence="8">
    <location>
        <begin position="231"/>
        <end position="236"/>
    </location>
</feature>
<feature type="strand" evidence="8">
    <location>
        <begin position="241"/>
        <end position="245"/>
    </location>
</feature>
<feature type="strand" evidence="8">
    <location>
        <begin position="250"/>
        <end position="258"/>
    </location>
</feature>
<feature type="helix" evidence="8">
    <location>
        <begin position="262"/>
        <end position="267"/>
    </location>
</feature>
<feature type="strand" evidence="8">
    <location>
        <begin position="268"/>
        <end position="272"/>
    </location>
</feature>
<feature type="helix" evidence="8">
    <location>
        <begin position="276"/>
        <end position="284"/>
    </location>
</feature>
<feature type="strand" evidence="8">
    <location>
        <begin position="291"/>
        <end position="299"/>
    </location>
</feature>
<feature type="strand" evidence="8">
    <location>
        <begin position="303"/>
        <end position="308"/>
    </location>
</feature>
<feature type="strand" evidence="8">
    <location>
        <begin position="315"/>
        <end position="323"/>
    </location>
</feature>
<feature type="turn" evidence="8">
    <location>
        <begin position="324"/>
        <end position="326"/>
    </location>
</feature>
<feature type="strand" evidence="8">
    <location>
        <begin position="327"/>
        <end position="336"/>
    </location>
</feature>
<feature type="helix" evidence="8">
    <location>
        <begin position="337"/>
        <end position="339"/>
    </location>
</feature>
<feature type="helix" evidence="8">
    <location>
        <begin position="345"/>
        <end position="356"/>
    </location>
</feature>
<feature type="strand" evidence="8">
    <location>
        <begin position="361"/>
        <end position="367"/>
    </location>
</feature>
<feature type="helix" evidence="8">
    <location>
        <begin position="369"/>
        <end position="371"/>
    </location>
</feature>
<feature type="turn" evidence="8">
    <location>
        <begin position="373"/>
        <end position="375"/>
    </location>
</feature>
<feature type="strand" evidence="8">
    <location>
        <begin position="376"/>
        <end position="379"/>
    </location>
</feature>
<feature type="turn" evidence="8">
    <location>
        <begin position="384"/>
        <end position="386"/>
    </location>
</feature>
<feature type="helix" evidence="8">
    <location>
        <begin position="387"/>
        <end position="389"/>
    </location>
</feature>
<feature type="helix" evidence="8">
    <location>
        <begin position="390"/>
        <end position="394"/>
    </location>
</feature>
<feature type="strand" evidence="8">
    <location>
        <begin position="400"/>
        <end position="402"/>
    </location>
</feature>
<feature type="helix" evidence="8">
    <location>
        <begin position="405"/>
        <end position="407"/>
    </location>
</feature>
<feature type="helix" evidence="8">
    <location>
        <begin position="415"/>
        <end position="433"/>
    </location>
</feature>
<gene>
    <name evidence="4" type="primary">nctB</name>
    <name evidence="6" type="ORF">shn_30305</name>
</gene>